<name>RS2_PSEF5</name>
<accession>Q4KHH6</accession>
<evidence type="ECO:0000255" key="1">
    <source>
        <dbReference type="HAMAP-Rule" id="MF_00291"/>
    </source>
</evidence>
<evidence type="ECO:0000305" key="2"/>
<comment type="similarity">
    <text evidence="1">Belongs to the universal ribosomal protein uS2 family.</text>
</comment>
<proteinExistence type="inferred from homology"/>
<gene>
    <name evidence="1" type="primary">rpsB</name>
    <name type="ordered locus">PFL_1176</name>
</gene>
<dbReference type="EMBL" id="CP000076">
    <property type="protein sequence ID" value="AAY90463.1"/>
    <property type="molecule type" value="Genomic_DNA"/>
</dbReference>
<dbReference type="RefSeq" id="WP_011059524.1">
    <property type="nucleotide sequence ID" value="NC_004129.6"/>
</dbReference>
<dbReference type="SMR" id="Q4KHH6"/>
<dbReference type="STRING" id="220664.PFL_1176"/>
<dbReference type="GeneID" id="57474180"/>
<dbReference type="KEGG" id="pfl:PFL_1176"/>
<dbReference type="eggNOG" id="COG0052">
    <property type="taxonomic scope" value="Bacteria"/>
</dbReference>
<dbReference type="HOGENOM" id="CLU_040318_1_2_6"/>
<dbReference type="Proteomes" id="UP000008540">
    <property type="component" value="Chromosome"/>
</dbReference>
<dbReference type="GO" id="GO:0022627">
    <property type="term" value="C:cytosolic small ribosomal subunit"/>
    <property type="evidence" value="ECO:0007669"/>
    <property type="project" value="TreeGrafter"/>
</dbReference>
<dbReference type="GO" id="GO:0003735">
    <property type="term" value="F:structural constituent of ribosome"/>
    <property type="evidence" value="ECO:0007669"/>
    <property type="project" value="InterPro"/>
</dbReference>
<dbReference type="GO" id="GO:0006412">
    <property type="term" value="P:translation"/>
    <property type="evidence" value="ECO:0007669"/>
    <property type="project" value="UniProtKB-UniRule"/>
</dbReference>
<dbReference type="CDD" id="cd01425">
    <property type="entry name" value="RPS2"/>
    <property type="match status" value="1"/>
</dbReference>
<dbReference type="FunFam" id="1.10.287.610:FF:000001">
    <property type="entry name" value="30S ribosomal protein S2"/>
    <property type="match status" value="1"/>
</dbReference>
<dbReference type="Gene3D" id="3.40.50.10490">
    <property type="entry name" value="Glucose-6-phosphate isomerase like protein, domain 1"/>
    <property type="match status" value="1"/>
</dbReference>
<dbReference type="Gene3D" id="1.10.287.610">
    <property type="entry name" value="Helix hairpin bin"/>
    <property type="match status" value="1"/>
</dbReference>
<dbReference type="HAMAP" id="MF_00291_B">
    <property type="entry name" value="Ribosomal_uS2_B"/>
    <property type="match status" value="1"/>
</dbReference>
<dbReference type="InterPro" id="IPR001865">
    <property type="entry name" value="Ribosomal_uS2"/>
</dbReference>
<dbReference type="InterPro" id="IPR005706">
    <property type="entry name" value="Ribosomal_uS2_bac/mit/plastid"/>
</dbReference>
<dbReference type="InterPro" id="IPR018130">
    <property type="entry name" value="Ribosomal_uS2_CS"/>
</dbReference>
<dbReference type="InterPro" id="IPR023591">
    <property type="entry name" value="Ribosomal_uS2_flav_dom_sf"/>
</dbReference>
<dbReference type="NCBIfam" id="TIGR01011">
    <property type="entry name" value="rpsB_bact"/>
    <property type="match status" value="1"/>
</dbReference>
<dbReference type="PANTHER" id="PTHR12534">
    <property type="entry name" value="30S RIBOSOMAL PROTEIN S2 PROKARYOTIC AND ORGANELLAR"/>
    <property type="match status" value="1"/>
</dbReference>
<dbReference type="PANTHER" id="PTHR12534:SF0">
    <property type="entry name" value="SMALL RIBOSOMAL SUBUNIT PROTEIN US2M"/>
    <property type="match status" value="1"/>
</dbReference>
<dbReference type="Pfam" id="PF00318">
    <property type="entry name" value="Ribosomal_S2"/>
    <property type="match status" value="1"/>
</dbReference>
<dbReference type="PRINTS" id="PR00395">
    <property type="entry name" value="RIBOSOMALS2"/>
</dbReference>
<dbReference type="SUPFAM" id="SSF52313">
    <property type="entry name" value="Ribosomal protein S2"/>
    <property type="match status" value="1"/>
</dbReference>
<dbReference type="PROSITE" id="PS00962">
    <property type="entry name" value="RIBOSOMAL_S2_1"/>
    <property type="match status" value="1"/>
</dbReference>
<dbReference type="PROSITE" id="PS00963">
    <property type="entry name" value="RIBOSOMAL_S2_2"/>
    <property type="match status" value="1"/>
</dbReference>
<reference key="1">
    <citation type="journal article" date="2005" name="Nat. Biotechnol.">
        <title>Complete genome sequence of the plant commensal Pseudomonas fluorescens Pf-5.</title>
        <authorList>
            <person name="Paulsen I.T."/>
            <person name="Press C.M."/>
            <person name="Ravel J."/>
            <person name="Kobayashi D.Y."/>
            <person name="Myers G.S.A."/>
            <person name="Mavrodi D.V."/>
            <person name="DeBoy R.T."/>
            <person name="Seshadri R."/>
            <person name="Ren Q."/>
            <person name="Madupu R."/>
            <person name="Dodson R.J."/>
            <person name="Durkin A.S."/>
            <person name="Brinkac L.M."/>
            <person name="Daugherty S.C."/>
            <person name="Sullivan S.A."/>
            <person name="Rosovitz M.J."/>
            <person name="Gwinn M.L."/>
            <person name="Zhou L."/>
            <person name="Schneider D.J."/>
            <person name="Cartinhour S.W."/>
            <person name="Nelson W.C."/>
            <person name="Weidman J."/>
            <person name="Watkins K."/>
            <person name="Tran K."/>
            <person name="Khouri H."/>
            <person name="Pierson E.A."/>
            <person name="Pierson L.S. III"/>
            <person name="Thomashow L.S."/>
            <person name="Loper J.E."/>
        </authorList>
    </citation>
    <scope>NUCLEOTIDE SEQUENCE [LARGE SCALE GENOMIC DNA]</scope>
    <source>
        <strain>ATCC BAA-477 / NRRL B-23932 / Pf-5</strain>
    </source>
</reference>
<protein>
    <recommendedName>
        <fullName evidence="1">Small ribosomal subunit protein uS2</fullName>
    </recommendedName>
    <alternativeName>
        <fullName evidence="2">30S ribosomal protein S2</fullName>
    </alternativeName>
</protein>
<sequence length="245" mass="27017">MSQVNMRDMLKAGVHFGHQTRYWNPKMGKYIFGARNKIHIINLEKTLPMFNEALTFVERLAQGKNKILFVGTKRSAGKIVAEEAARCGSPYVDHRWLGGMLTNYKTIRASIKRLRDLEVQAEDGTFAKLTKKEALMRTRDLEKLDRSLGGIKDMGGLPDALFVIDVDHERIAITEANKLGIPVIGVVDTNSSPEGVDYIIPGNDDAIRAIQLYMGSMADAVIRGRNNVAGGTEVFEEAAAPAAEA</sequence>
<keyword id="KW-0687">Ribonucleoprotein</keyword>
<keyword id="KW-0689">Ribosomal protein</keyword>
<organism>
    <name type="scientific">Pseudomonas fluorescens (strain ATCC BAA-477 / NRRL B-23932 / Pf-5)</name>
    <dbReference type="NCBI Taxonomy" id="220664"/>
    <lineage>
        <taxon>Bacteria</taxon>
        <taxon>Pseudomonadati</taxon>
        <taxon>Pseudomonadota</taxon>
        <taxon>Gammaproteobacteria</taxon>
        <taxon>Pseudomonadales</taxon>
        <taxon>Pseudomonadaceae</taxon>
        <taxon>Pseudomonas</taxon>
    </lineage>
</organism>
<feature type="chain" id="PRO_1000004032" description="Small ribosomal subunit protein uS2">
    <location>
        <begin position="1"/>
        <end position="245"/>
    </location>
</feature>